<dbReference type="EMBL" id="AJ938182">
    <property type="protein sequence ID" value="CAI80493.1"/>
    <property type="molecule type" value="Genomic_DNA"/>
</dbReference>
<dbReference type="RefSeq" id="WP_001068337.1">
    <property type="nucleotide sequence ID" value="NC_007622.1"/>
</dbReference>
<dbReference type="SMR" id="Q2YWQ1"/>
<dbReference type="KEGG" id="sab:SAB0805"/>
<dbReference type="HOGENOM" id="CLU_182025_0_0_9"/>
<dbReference type="HAMAP" id="MF_01542">
    <property type="entry name" value="UPF0349"/>
    <property type="match status" value="1"/>
</dbReference>
<dbReference type="InterPro" id="IPR009910">
    <property type="entry name" value="DUF1450"/>
</dbReference>
<dbReference type="InterPro" id="IPR022916">
    <property type="entry name" value="UPF0349"/>
</dbReference>
<dbReference type="NCBIfam" id="NF010190">
    <property type="entry name" value="PRK13669.1"/>
    <property type="match status" value="1"/>
</dbReference>
<dbReference type="Pfam" id="PF07293">
    <property type="entry name" value="DUF1450"/>
    <property type="match status" value="1"/>
</dbReference>
<accession>Q2YWQ1</accession>
<comment type="similarity">
    <text evidence="1">Belongs to the UPF0349 family.</text>
</comment>
<protein>
    <recommendedName>
        <fullName evidence="1">UPF0349 protein SAB0805</fullName>
    </recommendedName>
</protein>
<name>Y805_STAAB</name>
<sequence>MNPIVEFCLSNMAKGGDYVFNQLENDPDVDVLEYGCLTHCGICSAGLYALVNGDIVEGDSPEELLQNIYAHIKETWIF</sequence>
<feature type="chain" id="PRO_0000300205" description="UPF0349 protein SAB0805">
    <location>
        <begin position="1"/>
        <end position="78"/>
    </location>
</feature>
<proteinExistence type="inferred from homology"/>
<reference key="1">
    <citation type="journal article" date="2007" name="PLoS ONE">
        <title>Molecular correlates of host specialization in Staphylococcus aureus.</title>
        <authorList>
            <person name="Herron-Olson L."/>
            <person name="Fitzgerald J.R."/>
            <person name="Musser J.M."/>
            <person name="Kapur V."/>
        </authorList>
    </citation>
    <scope>NUCLEOTIDE SEQUENCE [LARGE SCALE GENOMIC DNA]</scope>
    <source>
        <strain>bovine RF122 / ET3-1</strain>
    </source>
</reference>
<organism>
    <name type="scientific">Staphylococcus aureus (strain bovine RF122 / ET3-1)</name>
    <dbReference type="NCBI Taxonomy" id="273036"/>
    <lineage>
        <taxon>Bacteria</taxon>
        <taxon>Bacillati</taxon>
        <taxon>Bacillota</taxon>
        <taxon>Bacilli</taxon>
        <taxon>Bacillales</taxon>
        <taxon>Staphylococcaceae</taxon>
        <taxon>Staphylococcus</taxon>
    </lineage>
</organism>
<evidence type="ECO:0000255" key="1">
    <source>
        <dbReference type="HAMAP-Rule" id="MF_01542"/>
    </source>
</evidence>
<gene>
    <name type="ordered locus">SAB0805</name>
</gene>